<comment type="function">
    <text evidence="1">Involved in peptide bond synthesis. Stimulates efficient translation and peptide-bond synthesis on native or reconstituted 70S ribosomes in vitro. Probably functions indirectly by altering the affinity of the ribosome for aminoacyl-tRNA, thus increasing their reactivity as acceptors for peptidyl transferase (By similarity).</text>
</comment>
<comment type="pathway">
    <text>Protein biosynthesis; polypeptide chain elongation.</text>
</comment>
<comment type="subcellular location">
    <subcellularLocation>
        <location evidence="1">Cytoplasm</location>
    </subcellularLocation>
</comment>
<comment type="similarity">
    <text evidence="2">Belongs to the elongation factor P family.</text>
</comment>
<evidence type="ECO:0000250" key="1"/>
<evidence type="ECO:0000305" key="2"/>
<evidence type="ECO:0007829" key="3">
    <source>
        <dbReference type="PDB" id="1UEB"/>
    </source>
</evidence>
<protein>
    <recommendedName>
        <fullName>Elongation factor P</fullName>
        <shortName>EF-P</shortName>
    </recommendedName>
</protein>
<feature type="chain" id="PRO_0000094357" description="Elongation factor P">
    <location>
        <begin position="1"/>
        <end position="184"/>
    </location>
</feature>
<feature type="helix" evidence="3">
    <location>
        <begin position="4"/>
        <end position="6"/>
    </location>
</feature>
<feature type="strand" evidence="3">
    <location>
        <begin position="12"/>
        <end position="15"/>
    </location>
</feature>
<feature type="strand" evidence="3">
    <location>
        <begin position="18"/>
        <end position="30"/>
    </location>
</feature>
<feature type="strand" evidence="3">
    <location>
        <begin position="36"/>
        <end position="47"/>
    </location>
</feature>
<feature type="strand" evidence="3">
    <location>
        <begin position="49"/>
        <end position="55"/>
    </location>
</feature>
<feature type="strand" evidence="3">
    <location>
        <begin position="59"/>
        <end position="62"/>
    </location>
</feature>
<feature type="strand" evidence="3">
    <location>
        <begin position="65"/>
        <end position="76"/>
    </location>
</feature>
<feature type="strand" evidence="3">
    <location>
        <begin position="79"/>
        <end position="84"/>
    </location>
</feature>
<feature type="turn" evidence="3">
    <location>
        <begin position="85"/>
        <end position="87"/>
    </location>
</feature>
<feature type="strand" evidence="3">
    <location>
        <begin position="90"/>
        <end position="94"/>
    </location>
</feature>
<feature type="helix" evidence="3">
    <location>
        <begin position="95"/>
        <end position="97"/>
    </location>
</feature>
<feature type="helix" evidence="3">
    <location>
        <begin position="101"/>
        <end position="103"/>
    </location>
</feature>
<feature type="strand" evidence="3">
    <location>
        <begin position="109"/>
        <end position="115"/>
    </location>
</feature>
<feature type="strand" evidence="3">
    <location>
        <begin position="118"/>
        <end position="123"/>
    </location>
</feature>
<feature type="strand" evidence="3">
    <location>
        <begin position="126"/>
        <end position="134"/>
    </location>
</feature>
<feature type="strand" evidence="3">
    <location>
        <begin position="137"/>
        <end position="139"/>
    </location>
</feature>
<feature type="strand" evidence="3">
    <location>
        <begin position="142"/>
        <end position="145"/>
    </location>
</feature>
<feature type="strand" evidence="3">
    <location>
        <begin position="147"/>
        <end position="153"/>
    </location>
</feature>
<feature type="strand" evidence="3">
    <location>
        <begin position="158"/>
        <end position="162"/>
    </location>
</feature>
<feature type="strand" evidence="3">
    <location>
        <begin position="170"/>
        <end position="174"/>
    </location>
</feature>
<feature type="turn" evidence="3">
    <location>
        <begin position="175"/>
        <end position="178"/>
    </location>
</feature>
<feature type="strand" evidence="3">
    <location>
        <begin position="179"/>
        <end position="183"/>
    </location>
</feature>
<sequence>MISVTDLRPGTKVKMDGGLWECVEYQHQKLGRGGAKVVAKFKNLETGATVERTFNSGEKLEDIYVETRELQYLYPEGEEMVFMDLETYEQFAVPRSRVVGAEFFKEGMTALGDMYEGQPIKVTPPTVVELKVVDTPPGVRGDTVSGGSKPATLETGAVVQVPLFVEPGEVIKVDTRTGEYVGRA</sequence>
<organism>
    <name type="scientific">Thermus thermophilus (strain ATCC 27634 / DSM 579 / HB8)</name>
    <dbReference type="NCBI Taxonomy" id="300852"/>
    <lineage>
        <taxon>Bacteria</taxon>
        <taxon>Thermotogati</taxon>
        <taxon>Deinococcota</taxon>
        <taxon>Deinococci</taxon>
        <taxon>Thermales</taxon>
        <taxon>Thermaceae</taxon>
        <taxon>Thermus</taxon>
    </lineage>
</organism>
<gene>
    <name type="primary">efp</name>
    <name type="ordered locus">TTHA1125</name>
</gene>
<dbReference type="EMBL" id="AB103477">
    <property type="protein sequence ID" value="BAD14383.1"/>
    <property type="molecule type" value="Genomic_DNA"/>
</dbReference>
<dbReference type="EMBL" id="AP008226">
    <property type="protein sequence ID" value="BAD70948.1"/>
    <property type="molecule type" value="Genomic_DNA"/>
</dbReference>
<dbReference type="RefSeq" id="WP_011173195.1">
    <property type="nucleotide sequence ID" value="NC_006461.1"/>
</dbReference>
<dbReference type="RefSeq" id="YP_144391.1">
    <property type="nucleotide sequence ID" value="NC_006461.1"/>
</dbReference>
<dbReference type="PDB" id="1UEB">
    <property type="method" value="X-ray"/>
    <property type="resolution" value="1.65 A"/>
    <property type="chains" value="A/B=1-184"/>
</dbReference>
<dbReference type="PDB" id="4V6A">
    <property type="method" value="X-ray"/>
    <property type="resolution" value="3.10 A"/>
    <property type="chains" value="AV/CV=1-184"/>
</dbReference>
<dbReference type="PDBsum" id="1UEB"/>
<dbReference type="PDBsum" id="4V6A"/>
<dbReference type="SMR" id="Q76G20"/>
<dbReference type="IntAct" id="Q76G20">
    <property type="interactions" value="50"/>
</dbReference>
<dbReference type="EnsemblBacteria" id="BAD70948">
    <property type="protein sequence ID" value="BAD70948"/>
    <property type="gene ID" value="BAD70948"/>
</dbReference>
<dbReference type="GeneID" id="3169027"/>
<dbReference type="KEGG" id="ttj:TTHA1125"/>
<dbReference type="PATRIC" id="fig|300852.9.peg.1104"/>
<dbReference type="eggNOG" id="COG0231">
    <property type="taxonomic scope" value="Bacteria"/>
</dbReference>
<dbReference type="HOGENOM" id="CLU_074944_0_1_0"/>
<dbReference type="PhylomeDB" id="Q76G20"/>
<dbReference type="UniPathway" id="UPA00345"/>
<dbReference type="EvolutionaryTrace" id="Q76G20"/>
<dbReference type="Proteomes" id="UP000000532">
    <property type="component" value="Chromosome"/>
</dbReference>
<dbReference type="GO" id="GO:0005737">
    <property type="term" value="C:cytoplasm"/>
    <property type="evidence" value="ECO:0007669"/>
    <property type="project" value="UniProtKB-SubCell"/>
</dbReference>
<dbReference type="GO" id="GO:0003746">
    <property type="term" value="F:translation elongation factor activity"/>
    <property type="evidence" value="ECO:0007669"/>
    <property type="project" value="UniProtKB-UniRule"/>
</dbReference>
<dbReference type="GO" id="GO:0043043">
    <property type="term" value="P:peptide biosynthetic process"/>
    <property type="evidence" value="ECO:0007669"/>
    <property type="project" value="InterPro"/>
</dbReference>
<dbReference type="CDD" id="cd04470">
    <property type="entry name" value="S1_EF-P_repeat_1"/>
    <property type="match status" value="1"/>
</dbReference>
<dbReference type="CDD" id="cd05794">
    <property type="entry name" value="S1_EF-P_repeat_2"/>
    <property type="match status" value="1"/>
</dbReference>
<dbReference type="FunFam" id="2.30.30.30:FF:000003">
    <property type="entry name" value="Elongation factor P"/>
    <property type="match status" value="1"/>
</dbReference>
<dbReference type="FunFam" id="2.40.50.140:FF:000004">
    <property type="entry name" value="Elongation factor P"/>
    <property type="match status" value="1"/>
</dbReference>
<dbReference type="FunFam" id="2.40.50.140:FF:000009">
    <property type="entry name" value="Elongation factor P"/>
    <property type="match status" value="1"/>
</dbReference>
<dbReference type="Gene3D" id="2.30.30.30">
    <property type="match status" value="1"/>
</dbReference>
<dbReference type="Gene3D" id="2.40.50.140">
    <property type="entry name" value="Nucleic acid-binding proteins"/>
    <property type="match status" value="2"/>
</dbReference>
<dbReference type="HAMAP" id="MF_00141">
    <property type="entry name" value="EF_P"/>
    <property type="match status" value="1"/>
</dbReference>
<dbReference type="InterPro" id="IPR015365">
    <property type="entry name" value="Elong-fact-P_C"/>
</dbReference>
<dbReference type="InterPro" id="IPR012340">
    <property type="entry name" value="NA-bd_OB-fold"/>
</dbReference>
<dbReference type="InterPro" id="IPR014722">
    <property type="entry name" value="Rib_uL2_dom2"/>
</dbReference>
<dbReference type="InterPro" id="IPR020599">
    <property type="entry name" value="Transl_elong_fac_P/YeiP"/>
</dbReference>
<dbReference type="InterPro" id="IPR013185">
    <property type="entry name" value="Transl_elong_KOW-like"/>
</dbReference>
<dbReference type="InterPro" id="IPR001059">
    <property type="entry name" value="Transl_elong_P/YeiP_cen"/>
</dbReference>
<dbReference type="InterPro" id="IPR013852">
    <property type="entry name" value="Transl_elong_P/YeiP_CS"/>
</dbReference>
<dbReference type="InterPro" id="IPR011768">
    <property type="entry name" value="Transl_elongation_fac_P"/>
</dbReference>
<dbReference type="InterPro" id="IPR008991">
    <property type="entry name" value="Translation_prot_SH3-like_sf"/>
</dbReference>
<dbReference type="NCBIfam" id="TIGR00038">
    <property type="entry name" value="efp"/>
    <property type="match status" value="1"/>
</dbReference>
<dbReference type="NCBIfam" id="NF001810">
    <property type="entry name" value="PRK00529.1"/>
    <property type="match status" value="1"/>
</dbReference>
<dbReference type="PANTHER" id="PTHR30053">
    <property type="entry name" value="ELONGATION FACTOR P"/>
    <property type="match status" value="1"/>
</dbReference>
<dbReference type="PANTHER" id="PTHR30053:SF12">
    <property type="entry name" value="ELONGATION FACTOR P (EF-P) FAMILY PROTEIN"/>
    <property type="match status" value="1"/>
</dbReference>
<dbReference type="Pfam" id="PF01132">
    <property type="entry name" value="EFP"/>
    <property type="match status" value="1"/>
</dbReference>
<dbReference type="Pfam" id="PF08207">
    <property type="entry name" value="EFP_N"/>
    <property type="match status" value="1"/>
</dbReference>
<dbReference type="Pfam" id="PF09285">
    <property type="entry name" value="Elong-fact-P_C"/>
    <property type="match status" value="1"/>
</dbReference>
<dbReference type="PIRSF" id="PIRSF005901">
    <property type="entry name" value="EF-P"/>
    <property type="match status" value="1"/>
</dbReference>
<dbReference type="SMART" id="SM01185">
    <property type="entry name" value="EFP"/>
    <property type="match status" value="1"/>
</dbReference>
<dbReference type="SMART" id="SM00841">
    <property type="entry name" value="Elong-fact-P_C"/>
    <property type="match status" value="1"/>
</dbReference>
<dbReference type="SUPFAM" id="SSF50249">
    <property type="entry name" value="Nucleic acid-binding proteins"/>
    <property type="match status" value="2"/>
</dbReference>
<dbReference type="SUPFAM" id="SSF50104">
    <property type="entry name" value="Translation proteins SH3-like domain"/>
    <property type="match status" value="1"/>
</dbReference>
<dbReference type="PROSITE" id="PS01275">
    <property type="entry name" value="EFP"/>
    <property type="match status" value="1"/>
</dbReference>
<reference key="1">
    <citation type="journal article" date="2004" name="Proc. Natl. Acad. Sci. U.S.A.">
        <title>Crystal structure of elongation factor P from Thermus thermophilus HB8.</title>
        <authorList>
            <person name="Hanawa-Suetsugu K."/>
            <person name="Sekine S."/>
            <person name="Sakai H."/>
            <person name="Hori-Takemoto C."/>
            <person name="Terada T."/>
            <person name="Unzai S."/>
            <person name="Tame J.R.H."/>
            <person name="Kuramitsu S."/>
            <person name="Shirouzu M."/>
            <person name="Yokoyama S."/>
        </authorList>
    </citation>
    <scope>NUCLEOTIDE SEQUENCE [GENOMIC DNA]</scope>
    <scope>X-RAY CRYSTALLOGRAPHY (1.65 ANGSTROMS)</scope>
</reference>
<reference key="2">
    <citation type="submission" date="2004-11" db="EMBL/GenBank/DDBJ databases">
        <title>Complete genome sequence of Thermus thermophilus HB8.</title>
        <authorList>
            <person name="Masui R."/>
            <person name="Kurokawa K."/>
            <person name="Nakagawa N."/>
            <person name="Tokunaga F."/>
            <person name="Koyama Y."/>
            <person name="Shibata T."/>
            <person name="Oshima T."/>
            <person name="Yokoyama S."/>
            <person name="Yasunaga T."/>
            <person name="Kuramitsu S."/>
        </authorList>
    </citation>
    <scope>NUCLEOTIDE SEQUENCE [LARGE SCALE GENOMIC DNA]</scope>
    <source>
        <strain>ATCC 27634 / DSM 579 / HB8</strain>
    </source>
</reference>
<name>EFP_THET8</name>
<accession>Q76G20</accession>
<accession>Q5SJ89</accession>
<keyword id="KW-0002">3D-structure</keyword>
<keyword id="KW-0963">Cytoplasm</keyword>
<keyword id="KW-0251">Elongation factor</keyword>
<keyword id="KW-0648">Protein biosynthesis</keyword>
<keyword id="KW-1185">Reference proteome</keyword>
<proteinExistence type="evidence at protein level"/>